<keyword id="KW-0520">NAD</keyword>
<keyword id="KW-0521">NADP</keyword>
<keyword id="KW-0560">Oxidoreductase</keyword>
<keyword id="KW-0662">Pyridine nucleotide biosynthesis</keyword>
<keyword id="KW-1185">Reference proteome</keyword>
<sequence>MLKIAMIGCGAIGASVLELLHGDSDVVVDRVITVPEARDRTEIAVARWAPRARVLEVLAADDAPDLVVECAGHGAIAAHVVPALERGIPCVVTSVGALSAPGMAQLLEQAARRGKTQVQLLSGAIGGIDALAAARVGGLDSVVYTGRKPPMAWKGTPAEAVCDLDSLTVAHCIFDGSAEQAAQLYPKNANVAATLSLAGLGLKRTQVQLFADPGVSENVHHVAAHGAFGSFELTMRGRPLAANPKTSALTVYSVVRALLNRGRALVI</sequence>
<accession>Q126F5</accession>
<organism>
    <name type="scientific">Polaromonas sp. (strain JS666 / ATCC BAA-500)</name>
    <dbReference type="NCBI Taxonomy" id="296591"/>
    <lineage>
        <taxon>Bacteria</taxon>
        <taxon>Pseudomonadati</taxon>
        <taxon>Pseudomonadota</taxon>
        <taxon>Betaproteobacteria</taxon>
        <taxon>Burkholderiales</taxon>
        <taxon>Comamonadaceae</taxon>
        <taxon>Polaromonas</taxon>
    </lineage>
</organism>
<proteinExistence type="inferred from homology"/>
<gene>
    <name evidence="1" type="primary">nadX</name>
    <name type="ordered locus">Bpro_3686</name>
</gene>
<evidence type="ECO:0000255" key="1">
    <source>
        <dbReference type="HAMAP-Rule" id="MF_01265"/>
    </source>
</evidence>
<comment type="function">
    <text evidence="1">Specifically catalyzes the NAD or NADP-dependent dehydrogenation of L-aspartate to iminoaspartate.</text>
</comment>
<comment type="catalytic activity">
    <reaction evidence="1">
        <text>L-aspartate + NADP(+) + H2O = oxaloacetate + NH4(+) + NADPH + H(+)</text>
        <dbReference type="Rhea" id="RHEA:11784"/>
        <dbReference type="ChEBI" id="CHEBI:15377"/>
        <dbReference type="ChEBI" id="CHEBI:15378"/>
        <dbReference type="ChEBI" id="CHEBI:16452"/>
        <dbReference type="ChEBI" id="CHEBI:28938"/>
        <dbReference type="ChEBI" id="CHEBI:29991"/>
        <dbReference type="ChEBI" id="CHEBI:57783"/>
        <dbReference type="ChEBI" id="CHEBI:58349"/>
        <dbReference type="EC" id="1.4.1.21"/>
    </reaction>
</comment>
<comment type="catalytic activity">
    <reaction evidence="1">
        <text>L-aspartate + NAD(+) + H2O = oxaloacetate + NH4(+) + NADH + H(+)</text>
        <dbReference type="Rhea" id="RHEA:11788"/>
        <dbReference type="ChEBI" id="CHEBI:15377"/>
        <dbReference type="ChEBI" id="CHEBI:15378"/>
        <dbReference type="ChEBI" id="CHEBI:16452"/>
        <dbReference type="ChEBI" id="CHEBI:28938"/>
        <dbReference type="ChEBI" id="CHEBI:29991"/>
        <dbReference type="ChEBI" id="CHEBI:57540"/>
        <dbReference type="ChEBI" id="CHEBI:57945"/>
        <dbReference type="EC" id="1.4.1.21"/>
    </reaction>
</comment>
<comment type="pathway">
    <text evidence="1">Cofactor biosynthesis; NAD(+) biosynthesis; iminoaspartate from L-aspartate (dehydrogenase route): step 1/1.</text>
</comment>
<comment type="miscellaneous">
    <text evidence="1">The iminoaspartate product is unstable in aqueous solution and can decompose to oxaloacetate and ammonia.</text>
</comment>
<comment type="similarity">
    <text evidence="1">Belongs to the L-aspartate dehydrogenase family.</text>
</comment>
<protein>
    <recommendedName>
        <fullName evidence="1">L-aspartate dehydrogenase</fullName>
        <ecNumber evidence="1">1.4.1.21</ecNumber>
    </recommendedName>
</protein>
<name>ASPD_POLSJ</name>
<reference key="1">
    <citation type="journal article" date="2008" name="Appl. Environ. Microbiol.">
        <title>The genome of Polaromonas sp. strain JS666: insights into the evolution of a hydrocarbon- and xenobiotic-degrading bacterium, and features of relevance to biotechnology.</title>
        <authorList>
            <person name="Mattes T.E."/>
            <person name="Alexander A.K."/>
            <person name="Richardson P.M."/>
            <person name="Munk A.C."/>
            <person name="Han C.S."/>
            <person name="Stothard P."/>
            <person name="Coleman N.V."/>
        </authorList>
    </citation>
    <scope>NUCLEOTIDE SEQUENCE [LARGE SCALE GENOMIC DNA]</scope>
    <source>
        <strain>JS666 / ATCC BAA-500</strain>
    </source>
</reference>
<dbReference type="EC" id="1.4.1.21" evidence="1"/>
<dbReference type="EMBL" id="CP000316">
    <property type="protein sequence ID" value="ABE45587.1"/>
    <property type="molecule type" value="Genomic_DNA"/>
</dbReference>
<dbReference type="RefSeq" id="WP_011484578.1">
    <property type="nucleotide sequence ID" value="NC_007948.1"/>
</dbReference>
<dbReference type="SMR" id="Q126F5"/>
<dbReference type="STRING" id="296591.Bpro_3686"/>
<dbReference type="KEGG" id="pol:Bpro_3686"/>
<dbReference type="eggNOG" id="COG1712">
    <property type="taxonomic scope" value="Bacteria"/>
</dbReference>
<dbReference type="HOGENOM" id="CLU_089550_0_0_4"/>
<dbReference type="OrthoDB" id="7056904at2"/>
<dbReference type="UniPathway" id="UPA00253">
    <property type="reaction ID" value="UER00456"/>
</dbReference>
<dbReference type="Proteomes" id="UP000001983">
    <property type="component" value="Chromosome"/>
</dbReference>
<dbReference type="GO" id="GO:0033735">
    <property type="term" value="F:aspartate dehydrogenase activity"/>
    <property type="evidence" value="ECO:0007669"/>
    <property type="project" value="UniProtKB-EC"/>
</dbReference>
<dbReference type="GO" id="GO:0051287">
    <property type="term" value="F:NAD binding"/>
    <property type="evidence" value="ECO:0007669"/>
    <property type="project" value="UniProtKB-UniRule"/>
</dbReference>
<dbReference type="GO" id="GO:0050661">
    <property type="term" value="F:NADP binding"/>
    <property type="evidence" value="ECO:0007669"/>
    <property type="project" value="UniProtKB-UniRule"/>
</dbReference>
<dbReference type="GO" id="GO:0016639">
    <property type="term" value="F:oxidoreductase activity, acting on the CH-NH2 group of donors, NAD or NADP as acceptor"/>
    <property type="evidence" value="ECO:0007669"/>
    <property type="project" value="UniProtKB-UniRule"/>
</dbReference>
<dbReference type="GO" id="GO:0009435">
    <property type="term" value="P:NAD biosynthetic process"/>
    <property type="evidence" value="ECO:0007669"/>
    <property type="project" value="UniProtKB-UniRule"/>
</dbReference>
<dbReference type="Gene3D" id="3.30.360.10">
    <property type="entry name" value="Dihydrodipicolinate Reductase, domain 2"/>
    <property type="match status" value="1"/>
</dbReference>
<dbReference type="Gene3D" id="3.40.50.720">
    <property type="entry name" value="NAD(P)-binding Rossmann-like Domain"/>
    <property type="match status" value="1"/>
</dbReference>
<dbReference type="HAMAP" id="MF_01265">
    <property type="entry name" value="NadX"/>
    <property type="match status" value="1"/>
</dbReference>
<dbReference type="InterPro" id="IPR005106">
    <property type="entry name" value="Asp/hSer_DH_NAD-bd"/>
</dbReference>
<dbReference type="InterPro" id="IPR002811">
    <property type="entry name" value="Asp_DH"/>
</dbReference>
<dbReference type="InterPro" id="IPR020626">
    <property type="entry name" value="Asp_DH_prok"/>
</dbReference>
<dbReference type="InterPro" id="IPR011182">
    <property type="entry name" value="L-Asp_DH"/>
</dbReference>
<dbReference type="InterPro" id="IPR036291">
    <property type="entry name" value="NAD(P)-bd_dom_sf"/>
</dbReference>
<dbReference type="NCBIfam" id="NF009827">
    <property type="entry name" value="PRK13303.1-2"/>
    <property type="match status" value="1"/>
</dbReference>
<dbReference type="NCBIfam" id="NF009828">
    <property type="entry name" value="PRK13303.1-3"/>
    <property type="match status" value="1"/>
</dbReference>
<dbReference type="PANTHER" id="PTHR31873:SF6">
    <property type="entry name" value="ASPARTATE DEHYDROGENASE DOMAIN-CONTAINING PROTEIN"/>
    <property type="match status" value="1"/>
</dbReference>
<dbReference type="PANTHER" id="PTHR31873">
    <property type="entry name" value="L-ASPARTATE DEHYDROGENASE-RELATED"/>
    <property type="match status" value="1"/>
</dbReference>
<dbReference type="Pfam" id="PF01958">
    <property type="entry name" value="Asp_DH_C"/>
    <property type="match status" value="1"/>
</dbReference>
<dbReference type="Pfam" id="PF03447">
    <property type="entry name" value="NAD_binding_3"/>
    <property type="match status" value="1"/>
</dbReference>
<dbReference type="PIRSF" id="PIRSF005227">
    <property type="entry name" value="Asp_dh_NAD_syn"/>
    <property type="match status" value="1"/>
</dbReference>
<dbReference type="SUPFAM" id="SSF55347">
    <property type="entry name" value="Glyceraldehyde-3-phosphate dehydrogenase-like, C-terminal domain"/>
    <property type="match status" value="1"/>
</dbReference>
<dbReference type="SUPFAM" id="SSF51735">
    <property type="entry name" value="NAD(P)-binding Rossmann-fold domains"/>
    <property type="match status" value="1"/>
</dbReference>
<feature type="chain" id="PRO_1000067310" description="L-aspartate dehydrogenase">
    <location>
        <begin position="1"/>
        <end position="267"/>
    </location>
</feature>
<feature type="active site" evidence="1">
    <location>
        <position position="220"/>
    </location>
</feature>
<feature type="binding site" evidence="1">
    <location>
        <position position="124"/>
    </location>
    <ligand>
        <name>NAD(+)</name>
        <dbReference type="ChEBI" id="CHEBI:57540"/>
    </ligand>
</feature>
<feature type="binding site" evidence="1">
    <location>
        <position position="190"/>
    </location>
    <ligand>
        <name>NAD(+)</name>
        <dbReference type="ChEBI" id="CHEBI:57540"/>
    </ligand>
</feature>